<organismHost>
    <name type="scientific">Homo sapiens</name>
    <name type="common">Human</name>
    <dbReference type="NCBI Taxonomy" id="9606"/>
</organismHost>
<protein>
    <recommendedName>
        <fullName evidence="1">Protein E6</fullName>
    </recommendedName>
</protein>
<feature type="chain" id="PRO_0000133352" description="Protein E6">
    <location>
        <begin position="1"/>
        <end position="142"/>
    </location>
</feature>
<feature type="zinc finger region" evidence="1">
    <location>
        <begin position="31"/>
        <end position="67"/>
    </location>
</feature>
<feature type="zinc finger region" evidence="1">
    <location>
        <begin position="104"/>
        <end position="140"/>
    </location>
</feature>
<keyword id="KW-0010">Activator</keyword>
<keyword id="KW-0238">DNA-binding</keyword>
<keyword id="KW-0244">Early protein</keyword>
<keyword id="KW-1035">Host cytoplasm</keyword>
<keyword id="KW-1048">Host nucleus</keyword>
<keyword id="KW-0945">Host-virus interaction</keyword>
<keyword id="KW-1090">Inhibition of host innate immune response by virus</keyword>
<keyword id="KW-0479">Metal-binding</keyword>
<keyword id="KW-1119">Modulation of host cell apoptosis by virus</keyword>
<keyword id="KW-1185">Reference proteome</keyword>
<keyword id="KW-0804">Transcription</keyword>
<keyword id="KW-0805">Transcription regulation</keyword>
<keyword id="KW-0899">Viral immunoevasion</keyword>
<keyword id="KW-0862">Zinc</keyword>
<keyword id="KW-0863">Zinc-finger</keyword>
<evidence type="ECO:0000255" key="1">
    <source>
        <dbReference type="HAMAP-Rule" id="MF_04006"/>
    </source>
</evidence>
<evidence type="ECO:0000305" key="2"/>
<organism>
    <name type="scientific">Human papillomavirus type 32</name>
    <dbReference type="NCBI Taxonomy" id="333763"/>
    <lineage>
        <taxon>Viruses</taxon>
        <taxon>Monodnaviria</taxon>
        <taxon>Shotokuvirae</taxon>
        <taxon>Cossaviricota</taxon>
        <taxon>Papovaviricetes</taxon>
        <taxon>Zurhausenvirales</taxon>
        <taxon>Papillomaviridae</taxon>
        <taxon>Firstpapillomavirinae</taxon>
        <taxon>Alphapapillomavirus</taxon>
        <taxon>Alphapapillomavirus 1</taxon>
    </lineage>
</organism>
<sequence length="142" mass="16631">MASTSASSQPSTLYQLCKDFGLTLRNLQICCIWCKNHLTSAEAYAYHFKDLHVVWKKGFPYAACAFCLEFYSKVCALRHYDRSAFWHTVEQETGLLLEEQIIRCAICQKPLSPSEKDHHIYNGRHFRFILNRWTGRCTQCRE</sequence>
<comment type="function">
    <text evidence="1">Plays a major role in the induction and maintenance of cellular transformation. E6 associates with host UBE3A/E6-AP ubiquitin-protein ligase and modulates its activity. Sequesters tumor suppressor TP53 in the host cytoplasm and modulates its activity by interacting with host EP300 that results in the reduction of TP53 acetylation and activation. In turn, apoptosis induced by DNA damage is inhibited. E6 also protects host keratinocytes from apoptosis by mediating the degradation of host BAK1. May also inhibit host immune response.</text>
</comment>
<comment type="subunit">
    <text evidence="1">Forms homodimers. Interacts with ubiquitin-protein ligase UBE3A/E6-AP; this interaction stimulates UBE3A ubiquitin activity. Interacts with host TP53 and EP300; this interaction inhibits TP53 activity.</text>
</comment>
<comment type="subcellular location">
    <subcellularLocation>
        <location evidence="1">Host cytoplasm</location>
    </subcellularLocation>
    <subcellularLocation>
        <location evidence="1">Host nucleus</location>
    </subcellularLocation>
</comment>
<comment type="miscellaneous">
    <text evidence="1">Belongs to the low risk human alphapapillomavirus family. The cancer-causing human papillomavirus E6 protein has a unique carboxy terminal PDZ domain containing substrate but low risk E6s do not possess this domain.</text>
</comment>
<comment type="similarity">
    <text evidence="2">Belongs to the papillomaviridae E6 protein family.</text>
</comment>
<reference key="1">
    <citation type="journal article" date="1994" name="Curr. Top. Microbiol. Immunol.">
        <title>Primer-directed sequencing of human papillomavirus types.</title>
        <authorList>
            <person name="Delius H."/>
            <person name="Hofmann B."/>
        </authorList>
    </citation>
    <scope>NUCLEOTIDE SEQUENCE [GENOMIC DNA]</scope>
</reference>
<gene>
    <name evidence="1" type="primary">E6</name>
</gene>
<accession>P36810</accession>
<dbReference type="EMBL" id="X74475">
    <property type="protein sequence ID" value="CAA52549.1"/>
    <property type="molecule type" value="Genomic_DNA"/>
</dbReference>
<dbReference type="PIR" id="S36509">
    <property type="entry name" value="S36509"/>
</dbReference>
<dbReference type="RefSeq" id="NP_041801.1">
    <property type="nucleotide sequence ID" value="NC_001586.1"/>
</dbReference>
<dbReference type="SMR" id="P36810"/>
<dbReference type="BioGRID" id="4263570">
    <property type="interactions" value="13"/>
</dbReference>
<dbReference type="IntAct" id="P36810">
    <property type="interactions" value="15"/>
</dbReference>
<dbReference type="MINT" id="P36810"/>
<dbReference type="GeneID" id="1489424"/>
<dbReference type="KEGG" id="vg:1489424"/>
<dbReference type="OrthoDB" id="27353at10239"/>
<dbReference type="Proteomes" id="UP000009117">
    <property type="component" value="Genome"/>
</dbReference>
<dbReference type="GO" id="GO:0030430">
    <property type="term" value="C:host cell cytoplasm"/>
    <property type="evidence" value="ECO:0007669"/>
    <property type="project" value="UniProtKB-SubCell"/>
</dbReference>
<dbReference type="GO" id="GO:0042025">
    <property type="term" value="C:host cell nucleus"/>
    <property type="evidence" value="ECO:0007669"/>
    <property type="project" value="UniProtKB-SubCell"/>
</dbReference>
<dbReference type="GO" id="GO:0003677">
    <property type="term" value="F:DNA binding"/>
    <property type="evidence" value="ECO:0007669"/>
    <property type="project" value="UniProtKB-UniRule"/>
</dbReference>
<dbReference type="GO" id="GO:0008270">
    <property type="term" value="F:zinc ion binding"/>
    <property type="evidence" value="ECO:0007669"/>
    <property type="project" value="UniProtKB-KW"/>
</dbReference>
<dbReference type="GO" id="GO:0006351">
    <property type="term" value="P:DNA-templated transcription"/>
    <property type="evidence" value="ECO:0007669"/>
    <property type="project" value="UniProtKB-UniRule"/>
</dbReference>
<dbReference type="GO" id="GO:0006355">
    <property type="term" value="P:regulation of DNA-templated transcription"/>
    <property type="evidence" value="ECO:0007669"/>
    <property type="project" value="UniProtKB-UniRule"/>
</dbReference>
<dbReference type="GO" id="GO:0052150">
    <property type="term" value="P:symbiont-mediated perturbation of host apoptosis"/>
    <property type="evidence" value="ECO:0007669"/>
    <property type="project" value="UniProtKB-KW"/>
</dbReference>
<dbReference type="GO" id="GO:0039648">
    <property type="term" value="P:symbiont-mediated perturbation of host ubiquitin-like protein modification"/>
    <property type="evidence" value="ECO:0007669"/>
    <property type="project" value="UniProtKB-UniRule"/>
</dbReference>
<dbReference type="GO" id="GO:0052170">
    <property type="term" value="P:symbiont-mediated suppression of host innate immune response"/>
    <property type="evidence" value="ECO:0007669"/>
    <property type="project" value="UniProtKB-KW"/>
</dbReference>
<dbReference type="GO" id="GO:0039502">
    <property type="term" value="P:symbiont-mediated suppression of host type I interferon-mediated signaling pathway"/>
    <property type="evidence" value="ECO:0007669"/>
    <property type="project" value="UniProtKB-UniRule"/>
</dbReference>
<dbReference type="Gene3D" id="3.30.240.40">
    <property type="entry name" value="E6 early regulatory protein"/>
    <property type="match status" value="2"/>
</dbReference>
<dbReference type="HAMAP" id="MF_04006">
    <property type="entry name" value="HPV_E6"/>
    <property type="match status" value="1"/>
</dbReference>
<dbReference type="InterPro" id="IPR001334">
    <property type="entry name" value="E6"/>
</dbReference>
<dbReference type="InterPro" id="IPR038575">
    <property type="entry name" value="E6_sf"/>
</dbReference>
<dbReference type="Pfam" id="PF00518">
    <property type="entry name" value="E6"/>
    <property type="match status" value="1"/>
</dbReference>
<dbReference type="SUPFAM" id="SSF161229">
    <property type="entry name" value="E6 C-terminal domain-like"/>
    <property type="match status" value="2"/>
</dbReference>
<proteinExistence type="inferred from homology"/>
<name>VE6_HPV32</name>